<keyword id="KW-0067">ATP-binding</keyword>
<keyword id="KW-0963">Cytoplasm</keyword>
<keyword id="KW-0460">Magnesium</keyword>
<keyword id="KW-0479">Metal-binding</keyword>
<keyword id="KW-0547">Nucleotide-binding</keyword>
<keyword id="KW-0554">One-carbon metabolism</keyword>
<keyword id="KW-0630">Potassium</keyword>
<keyword id="KW-0808">Transferase</keyword>
<reference key="1">
    <citation type="journal article" date="2006" name="Lancet">
        <title>Complete genome sequence of USA300, an epidemic clone of community-acquired meticillin-resistant Staphylococcus aureus.</title>
        <authorList>
            <person name="Diep B.A."/>
            <person name="Gill S.R."/>
            <person name="Chang R.F."/>
            <person name="Phan T.H."/>
            <person name="Chen J.H."/>
            <person name="Davidson M.G."/>
            <person name="Lin F."/>
            <person name="Lin J."/>
            <person name="Carleton H.A."/>
            <person name="Mongodin E.F."/>
            <person name="Sensabaugh G.F."/>
            <person name="Perdreau-Remington F."/>
        </authorList>
    </citation>
    <scope>NUCLEOTIDE SEQUENCE [LARGE SCALE GENOMIC DNA]</scope>
    <source>
        <strain>USA300</strain>
    </source>
</reference>
<organism>
    <name type="scientific">Staphylococcus aureus (strain USA300)</name>
    <dbReference type="NCBI Taxonomy" id="367830"/>
    <lineage>
        <taxon>Bacteria</taxon>
        <taxon>Bacillati</taxon>
        <taxon>Bacillota</taxon>
        <taxon>Bacilli</taxon>
        <taxon>Bacillales</taxon>
        <taxon>Staphylococcaceae</taxon>
        <taxon>Staphylococcus</taxon>
    </lineage>
</organism>
<dbReference type="EC" id="2.5.1.6" evidence="1"/>
<dbReference type="EMBL" id="CP000255">
    <property type="protein sequence ID" value="ABD20931.1"/>
    <property type="molecule type" value="Genomic_DNA"/>
</dbReference>
<dbReference type="RefSeq" id="WP_000933822.1">
    <property type="nucleotide sequence ID" value="NZ_CP027476.1"/>
</dbReference>
<dbReference type="SMR" id="Q2FFV6"/>
<dbReference type="KEGG" id="saa:SAUSA300_1730"/>
<dbReference type="HOGENOM" id="CLU_041802_1_1_9"/>
<dbReference type="OMA" id="ASYMARY"/>
<dbReference type="UniPathway" id="UPA00315">
    <property type="reaction ID" value="UER00080"/>
</dbReference>
<dbReference type="Proteomes" id="UP000001939">
    <property type="component" value="Chromosome"/>
</dbReference>
<dbReference type="GO" id="GO:0005737">
    <property type="term" value="C:cytoplasm"/>
    <property type="evidence" value="ECO:0007669"/>
    <property type="project" value="UniProtKB-SubCell"/>
</dbReference>
<dbReference type="GO" id="GO:0005524">
    <property type="term" value="F:ATP binding"/>
    <property type="evidence" value="ECO:0007669"/>
    <property type="project" value="UniProtKB-UniRule"/>
</dbReference>
<dbReference type="GO" id="GO:0000287">
    <property type="term" value="F:magnesium ion binding"/>
    <property type="evidence" value="ECO:0007669"/>
    <property type="project" value="UniProtKB-UniRule"/>
</dbReference>
<dbReference type="GO" id="GO:0004478">
    <property type="term" value="F:methionine adenosyltransferase activity"/>
    <property type="evidence" value="ECO:0007669"/>
    <property type="project" value="UniProtKB-UniRule"/>
</dbReference>
<dbReference type="GO" id="GO:0006730">
    <property type="term" value="P:one-carbon metabolic process"/>
    <property type="evidence" value="ECO:0007669"/>
    <property type="project" value="UniProtKB-KW"/>
</dbReference>
<dbReference type="GO" id="GO:0006556">
    <property type="term" value="P:S-adenosylmethionine biosynthetic process"/>
    <property type="evidence" value="ECO:0007669"/>
    <property type="project" value="UniProtKB-UniRule"/>
</dbReference>
<dbReference type="CDD" id="cd18079">
    <property type="entry name" value="S-AdoMet_synt"/>
    <property type="match status" value="1"/>
</dbReference>
<dbReference type="FunFam" id="3.30.300.10:FF:000003">
    <property type="entry name" value="S-adenosylmethionine synthase"/>
    <property type="match status" value="1"/>
</dbReference>
<dbReference type="FunFam" id="3.30.300.10:FF:000004">
    <property type="entry name" value="S-adenosylmethionine synthase"/>
    <property type="match status" value="1"/>
</dbReference>
<dbReference type="Gene3D" id="3.30.300.10">
    <property type="match status" value="3"/>
</dbReference>
<dbReference type="HAMAP" id="MF_00086">
    <property type="entry name" value="S_AdoMet_synth1"/>
    <property type="match status" value="1"/>
</dbReference>
<dbReference type="InterPro" id="IPR022631">
    <property type="entry name" value="ADOMET_SYNTHASE_CS"/>
</dbReference>
<dbReference type="InterPro" id="IPR022630">
    <property type="entry name" value="S-AdoMet_synt_C"/>
</dbReference>
<dbReference type="InterPro" id="IPR022629">
    <property type="entry name" value="S-AdoMet_synt_central"/>
</dbReference>
<dbReference type="InterPro" id="IPR022628">
    <property type="entry name" value="S-AdoMet_synt_N"/>
</dbReference>
<dbReference type="InterPro" id="IPR002133">
    <property type="entry name" value="S-AdoMet_synthetase"/>
</dbReference>
<dbReference type="InterPro" id="IPR022636">
    <property type="entry name" value="S-AdoMet_synthetase_sfam"/>
</dbReference>
<dbReference type="NCBIfam" id="TIGR01034">
    <property type="entry name" value="metK"/>
    <property type="match status" value="1"/>
</dbReference>
<dbReference type="PANTHER" id="PTHR11964">
    <property type="entry name" value="S-ADENOSYLMETHIONINE SYNTHETASE"/>
    <property type="match status" value="1"/>
</dbReference>
<dbReference type="Pfam" id="PF02773">
    <property type="entry name" value="S-AdoMet_synt_C"/>
    <property type="match status" value="1"/>
</dbReference>
<dbReference type="Pfam" id="PF02772">
    <property type="entry name" value="S-AdoMet_synt_M"/>
    <property type="match status" value="1"/>
</dbReference>
<dbReference type="Pfam" id="PF00438">
    <property type="entry name" value="S-AdoMet_synt_N"/>
    <property type="match status" value="1"/>
</dbReference>
<dbReference type="PIRSF" id="PIRSF000497">
    <property type="entry name" value="MAT"/>
    <property type="match status" value="1"/>
</dbReference>
<dbReference type="SUPFAM" id="SSF55973">
    <property type="entry name" value="S-adenosylmethionine synthetase"/>
    <property type="match status" value="3"/>
</dbReference>
<dbReference type="PROSITE" id="PS00376">
    <property type="entry name" value="ADOMET_SYNTHASE_1"/>
    <property type="match status" value="1"/>
</dbReference>
<dbReference type="PROSITE" id="PS00377">
    <property type="entry name" value="ADOMET_SYNTHASE_2"/>
    <property type="match status" value="1"/>
</dbReference>
<name>METK_STAA3</name>
<gene>
    <name evidence="1" type="primary">metK</name>
    <name type="ordered locus">SAUSA300_1730</name>
</gene>
<proteinExistence type="inferred from homology"/>
<evidence type="ECO:0000255" key="1">
    <source>
        <dbReference type="HAMAP-Rule" id="MF_00086"/>
    </source>
</evidence>
<protein>
    <recommendedName>
        <fullName evidence="1">S-adenosylmethionine synthase</fullName>
        <shortName evidence="1">AdoMet synthase</shortName>
        <ecNumber evidence="1">2.5.1.6</ecNumber>
    </recommendedName>
    <alternativeName>
        <fullName evidence="1">MAT</fullName>
    </alternativeName>
    <alternativeName>
        <fullName evidence="1">Methionine adenosyltransferase</fullName>
    </alternativeName>
</protein>
<sequence length="397" mass="43641">MLNNKRLFTSESVTEGHPDKIADQVSDAILDAILKDDPNARVACETTVTTGMALIAGEISTTTYVDIPKVVRETIKEIGYTRAKYGYDYETMAILTAIDEQSPDIAQGVDKALEYRDKDSEEEIEATGAGDQGLMFGYATNETETYMPLAIYLSHQLAKRLSDVRKDGTLNYLRPDGKVQVTVEYDENDNPVRIDTIVVSTQHAEDVTLEQIQEDIKAHVIYPTVPENLINEQTKFYINPTGRFVIGGPQGDAGLTGRKIIVDTYGGYARHGGGCFSGKDPTKVDRSAAYAARYVAKNIVAAGLADQCEVQLAYAIGVAEPVSIAIDTFGTGKVSEGQLVEAVRKHFDLRPAGIIKMLDLKQPIYKQTAAYGHFGRTDVLFPWEKLDKVEELKDAVK</sequence>
<accession>Q2FFV6</accession>
<feature type="chain" id="PRO_0000241040" description="S-adenosylmethionine synthase">
    <location>
        <begin position="1"/>
        <end position="397"/>
    </location>
</feature>
<feature type="region of interest" description="Flexible loop" evidence="1">
    <location>
        <begin position="101"/>
        <end position="111"/>
    </location>
</feature>
<feature type="binding site" description="in other chain" evidence="1">
    <location>
        <position position="17"/>
    </location>
    <ligand>
        <name>ATP</name>
        <dbReference type="ChEBI" id="CHEBI:30616"/>
        <note>ligand shared between two neighboring subunits</note>
    </ligand>
</feature>
<feature type="binding site" evidence="1">
    <location>
        <position position="19"/>
    </location>
    <ligand>
        <name>Mg(2+)</name>
        <dbReference type="ChEBI" id="CHEBI:18420"/>
    </ligand>
</feature>
<feature type="binding site" evidence="1">
    <location>
        <position position="45"/>
    </location>
    <ligand>
        <name>K(+)</name>
        <dbReference type="ChEBI" id="CHEBI:29103"/>
    </ligand>
</feature>
<feature type="binding site" description="in other chain" evidence="1">
    <location>
        <position position="58"/>
    </location>
    <ligand>
        <name>L-methionine</name>
        <dbReference type="ChEBI" id="CHEBI:57844"/>
        <note>ligand shared between two neighboring subunits</note>
    </ligand>
</feature>
<feature type="binding site" description="in other chain" evidence="1">
    <location>
        <position position="101"/>
    </location>
    <ligand>
        <name>L-methionine</name>
        <dbReference type="ChEBI" id="CHEBI:57844"/>
        <note>ligand shared between two neighboring subunits</note>
    </ligand>
</feature>
<feature type="binding site" description="in other chain" evidence="1">
    <location>
        <begin position="176"/>
        <end position="178"/>
    </location>
    <ligand>
        <name>ATP</name>
        <dbReference type="ChEBI" id="CHEBI:30616"/>
        <note>ligand shared between two neighboring subunits</note>
    </ligand>
</feature>
<feature type="binding site" description="in other chain" evidence="1">
    <location>
        <begin position="243"/>
        <end position="244"/>
    </location>
    <ligand>
        <name>ATP</name>
        <dbReference type="ChEBI" id="CHEBI:30616"/>
        <note>ligand shared between two neighboring subunits</note>
    </ligand>
</feature>
<feature type="binding site" evidence="1">
    <location>
        <position position="252"/>
    </location>
    <ligand>
        <name>ATP</name>
        <dbReference type="ChEBI" id="CHEBI:30616"/>
        <note>ligand shared between two neighboring subunits</note>
    </ligand>
</feature>
<feature type="binding site" evidence="1">
    <location>
        <position position="252"/>
    </location>
    <ligand>
        <name>L-methionine</name>
        <dbReference type="ChEBI" id="CHEBI:57844"/>
        <note>ligand shared between two neighboring subunits</note>
    </ligand>
</feature>
<feature type="binding site" description="in other chain" evidence="1">
    <location>
        <begin position="258"/>
        <end position="259"/>
    </location>
    <ligand>
        <name>ATP</name>
        <dbReference type="ChEBI" id="CHEBI:30616"/>
        <note>ligand shared between two neighboring subunits</note>
    </ligand>
</feature>
<feature type="binding site" evidence="1">
    <location>
        <position position="279"/>
    </location>
    <ligand>
        <name>ATP</name>
        <dbReference type="ChEBI" id="CHEBI:30616"/>
        <note>ligand shared between two neighboring subunits</note>
    </ligand>
</feature>
<feature type="binding site" description="in other chain" evidence="1">
    <location>
        <position position="283"/>
    </location>
    <ligand>
        <name>L-methionine</name>
        <dbReference type="ChEBI" id="CHEBI:57844"/>
        <note>ligand shared between two neighboring subunits</note>
    </ligand>
</feature>
<comment type="function">
    <text evidence="1">Catalyzes the formation of S-adenosylmethionine (AdoMet) from methionine and ATP. The overall synthetic reaction is composed of two sequential steps, AdoMet formation and the subsequent tripolyphosphate hydrolysis which occurs prior to release of AdoMet from the enzyme.</text>
</comment>
<comment type="catalytic activity">
    <reaction evidence="1">
        <text>L-methionine + ATP + H2O = S-adenosyl-L-methionine + phosphate + diphosphate</text>
        <dbReference type="Rhea" id="RHEA:21080"/>
        <dbReference type="ChEBI" id="CHEBI:15377"/>
        <dbReference type="ChEBI" id="CHEBI:30616"/>
        <dbReference type="ChEBI" id="CHEBI:33019"/>
        <dbReference type="ChEBI" id="CHEBI:43474"/>
        <dbReference type="ChEBI" id="CHEBI:57844"/>
        <dbReference type="ChEBI" id="CHEBI:59789"/>
        <dbReference type="EC" id="2.5.1.6"/>
    </reaction>
</comment>
<comment type="cofactor">
    <cofactor evidence="1">
        <name>Mg(2+)</name>
        <dbReference type="ChEBI" id="CHEBI:18420"/>
    </cofactor>
    <text evidence="1">Binds 2 divalent ions per subunit.</text>
</comment>
<comment type="cofactor">
    <cofactor evidence="1">
        <name>K(+)</name>
        <dbReference type="ChEBI" id="CHEBI:29103"/>
    </cofactor>
    <text evidence="1">Binds 1 potassium ion per subunit.</text>
</comment>
<comment type="pathway">
    <text evidence="1">Amino-acid biosynthesis; S-adenosyl-L-methionine biosynthesis; S-adenosyl-L-methionine from L-methionine: step 1/1.</text>
</comment>
<comment type="subunit">
    <text evidence="1">Homotetramer; dimer of dimers.</text>
</comment>
<comment type="subcellular location">
    <subcellularLocation>
        <location evidence="1">Cytoplasm</location>
    </subcellularLocation>
</comment>
<comment type="similarity">
    <text evidence="1">Belongs to the AdoMet synthase family.</text>
</comment>